<gene>
    <name evidence="1" type="primary">rplT</name>
    <name type="ordered locus">BDU_187</name>
</gene>
<feature type="chain" id="PRO_1000122277" description="Large ribosomal subunit protein bL20">
    <location>
        <begin position="1"/>
        <end position="115"/>
    </location>
</feature>
<protein>
    <recommendedName>
        <fullName evidence="1">Large ribosomal subunit protein bL20</fullName>
    </recommendedName>
    <alternativeName>
        <fullName evidence="2">50S ribosomal protein L20</fullName>
    </alternativeName>
</protein>
<sequence>MARVKNGIVHVARRKRILKKTKGFWGTKKSNYKKAKDTLRKGMMYATRDRKTRKRDLRSLWIVRISAALTGMGINYSRFFEGLRKLNIKLNRKILSNLAIEDIESFKKIVYEIKN</sequence>
<evidence type="ECO:0000255" key="1">
    <source>
        <dbReference type="HAMAP-Rule" id="MF_00382"/>
    </source>
</evidence>
<evidence type="ECO:0000305" key="2"/>
<dbReference type="EMBL" id="CP000976">
    <property type="protein sequence ID" value="ACH93143.1"/>
    <property type="molecule type" value="Genomic_DNA"/>
</dbReference>
<dbReference type="RefSeq" id="WP_012537955.1">
    <property type="nucleotide sequence ID" value="NC_011229.1"/>
</dbReference>
<dbReference type="SMR" id="B5RL14"/>
<dbReference type="STRING" id="412419.BDU_187"/>
<dbReference type="KEGG" id="bdu:BDU_187"/>
<dbReference type="eggNOG" id="COG0292">
    <property type="taxonomic scope" value="Bacteria"/>
</dbReference>
<dbReference type="HOGENOM" id="CLU_123265_0_1_12"/>
<dbReference type="OrthoDB" id="9808966at2"/>
<dbReference type="Proteomes" id="UP000000611">
    <property type="component" value="Chromosome"/>
</dbReference>
<dbReference type="GO" id="GO:1990904">
    <property type="term" value="C:ribonucleoprotein complex"/>
    <property type="evidence" value="ECO:0007669"/>
    <property type="project" value="UniProtKB-KW"/>
</dbReference>
<dbReference type="GO" id="GO:0005840">
    <property type="term" value="C:ribosome"/>
    <property type="evidence" value="ECO:0007669"/>
    <property type="project" value="UniProtKB-KW"/>
</dbReference>
<dbReference type="GO" id="GO:0019843">
    <property type="term" value="F:rRNA binding"/>
    <property type="evidence" value="ECO:0007669"/>
    <property type="project" value="UniProtKB-UniRule"/>
</dbReference>
<dbReference type="GO" id="GO:0003735">
    <property type="term" value="F:structural constituent of ribosome"/>
    <property type="evidence" value="ECO:0007669"/>
    <property type="project" value="InterPro"/>
</dbReference>
<dbReference type="GO" id="GO:0000027">
    <property type="term" value="P:ribosomal large subunit assembly"/>
    <property type="evidence" value="ECO:0007669"/>
    <property type="project" value="UniProtKB-UniRule"/>
</dbReference>
<dbReference type="GO" id="GO:0006412">
    <property type="term" value="P:translation"/>
    <property type="evidence" value="ECO:0007669"/>
    <property type="project" value="InterPro"/>
</dbReference>
<dbReference type="CDD" id="cd07026">
    <property type="entry name" value="Ribosomal_L20"/>
    <property type="match status" value="1"/>
</dbReference>
<dbReference type="FunFam" id="1.10.1900.20:FF:000001">
    <property type="entry name" value="50S ribosomal protein L20"/>
    <property type="match status" value="1"/>
</dbReference>
<dbReference type="Gene3D" id="6.10.160.10">
    <property type="match status" value="1"/>
</dbReference>
<dbReference type="Gene3D" id="1.10.1900.20">
    <property type="entry name" value="Ribosomal protein L20"/>
    <property type="match status" value="1"/>
</dbReference>
<dbReference type="HAMAP" id="MF_00382">
    <property type="entry name" value="Ribosomal_bL20"/>
    <property type="match status" value="1"/>
</dbReference>
<dbReference type="InterPro" id="IPR005813">
    <property type="entry name" value="Ribosomal_bL20"/>
</dbReference>
<dbReference type="InterPro" id="IPR035566">
    <property type="entry name" value="Ribosomal_protein_bL20_C"/>
</dbReference>
<dbReference type="NCBIfam" id="TIGR01032">
    <property type="entry name" value="rplT_bact"/>
    <property type="match status" value="1"/>
</dbReference>
<dbReference type="PANTHER" id="PTHR10986">
    <property type="entry name" value="39S RIBOSOMAL PROTEIN L20"/>
    <property type="match status" value="1"/>
</dbReference>
<dbReference type="Pfam" id="PF00453">
    <property type="entry name" value="Ribosomal_L20"/>
    <property type="match status" value="1"/>
</dbReference>
<dbReference type="PRINTS" id="PR00062">
    <property type="entry name" value="RIBOSOMALL20"/>
</dbReference>
<dbReference type="SUPFAM" id="SSF74731">
    <property type="entry name" value="Ribosomal protein L20"/>
    <property type="match status" value="1"/>
</dbReference>
<name>RL20_BORDL</name>
<keyword id="KW-0687">Ribonucleoprotein</keyword>
<keyword id="KW-0689">Ribosomal protein</keyword>
<keyword id="KW-0694">RNA-binding</keyword>
<keyword id="KW-0699">rRNA-binding</keyword>
<comment type="function">
    <text evidence="1">Binds directly to 23S ribosomal RNA and is necessary for the in vitro assembly process of the 50S ribosomal subunit. It is not involved in the protein synthesizing functions of that subunit.</text>
</comment>
<comment type="similarity">
    <text evidence="1">Belongs to the bacterial ribosomal protein bL20 family.</text>
</comment>
<accession>B5RL14</accession>
<reference key="1">
    <citation type="journal article" date="2008" name="PLoS Genet.">
        <title>The genome of Borrelia recurrentis, the agent of deadly louse-borne relapsing fever, is a degraded subset of tick-borne Borrelia duttonii.</title>
        <authorList>
            <person name="Lescot M."/>
            <person name="Audic S."/>
            <person name="Robert C."/>
            <person name="Nguyen T.T."/>
            <person name="Blanc G."/>
            <person name="Cutler S.J."/>
            <person name="Wincker P."/>
            <person name="Couloux A."/>
            <person name="Claverie J.-M."/>
            <person name="Raoult D."/>
            <person name="Drancourt M."/>
        </authorList>
    </citation>
    <scope>NUCLEOTIDE SEQUENCE [LARGE SCALE GENOMIC DNA]</scope>
    <source>
        <strain>Ly</strain>
    </source>
</reference>
<organism>
    <name type="scientific">Borrelia duttonii (strain Ly)</name>
    <dbReference type="NCBI Taxonomy" id="412419"/>
    <lineage>
        <taxon>Bacteria</taxon>
        <taxon>Pseudomonadati</taxon>
        <taxon>Spirochaetota</taxon>
        <taxon>Spirochaetia</taxon>
        <taxon>Spirochaetales</taxon>
        <taxon>Borreliaceae</taxon>
        <taxon>Borrelia</taxon>
    </lineage>
</organism>
<proteinExistence type="inferred from homology"/>